<name>XLNR_ASPNC</name>
<feature type="chain" id="PRO_0000393153" description="Xylanolytic transcriptional activator xlnR">
    <location>
        <begin position="1"/>
        <end position="945"/>
    </location>
</feature>
<feature type="DNA-binding region" description="Zn(2)-C6 fungal-type" evidence="2">
    <location>
        <begin position="125"/>
        <end position="151"/>
    </location>
</feature>
<feature type="region of interest" description="Disordered" evidence="3">
    <location>
        <begin position="1"/>
        <end position="33"/>
    </location>
</feature>
<feature type="region of interest" description="Disordered" evidence="3">
    <location>
        <begin position="52"/>
        <end position="93"/>
    </location>
</feature>
<feature type="region of interest" description="Disordered" evidence="3">
    <location>
        <begin position="172"/>
        <end position="210"/>
    </location>
</feature>
<feature type="region of interest" description="Disordered" evidence="3">
    <location>
        <begin position="559"/>
        <end position="601"/>
    </location>
</feature>
<feature type="compositionally biased region" description="Low complexity" evidence="3">
    <location>
        <begin position="1"/>
        <end position="23"/>
    </location>
</feature>
<feature type="compositionally biased region" description="Polar residues" evidence="3">
    <location>
        <begin position="63"/>
        <end position="72"/>
    </location>
</feature>
<feature type="compositionally biased region" description="Basic and acidic residues" evidence="3">
    <location>
        <begin position="73"/>
        <end position="84"/>
    </location>
</feature>
<feature type="compositionally biased region" description="Polar residues" evidence="3">
    <location>
        <begin position="176"/>
        <end position="188"/>
    </location>
</feature>
<feature type="compositionally biased region" description="Basic and acidic residues" evidence="3">
    <location>
        <begin position="565"/>
        <end position="581"/>
    </location>
</feature>
<protein>
    <recommendedName>
        <fullName>Xylanolytic transcriptional activator xlnR</fullName>
    </recommendedName>
    <alternativeName>
        <fullName>Xylanase regulator</fullName>
    </alternativeName>
</protein>
<organism>
    <name type="scientific">Aspergillus niger (strain ATCC MYA-4892 / CBS 513.88 / FGSC A1513)</name>
    <dbReference type="NCBI Taxonomy" id="425011"/>
    <lineage>
        <taxon>Eukaryota</taxon>
        <taxon>Fungi</taxon>
        <taxon>Dikarya</taxon>
        <taxon>Ascomycota</taxon>
        <taxon>Pezizomycotina</taxon>
        <taxon>Eurotiomycetes</taxon>
        <taxon>Eurotiomycetidae</taxon>
        <taxon>Eurotiales</taxon>
        <taxon>Aspergillaceae</taxon>
        <taxon>Aspergillus</taxon>
        <taxon>Aspergillus subgen. Circumdati</taxon>
    </lineage>
</organism>
<reference key="1">
    <citation type="journal article" date="2007" name="Nat. Biotechnol.">
        <title>Genome sequencing and analysis of the versatile cell factory Aspergillus niger CBS 513.88.</title>
        <authorList>
            <person name="Pel H.J."/>
            <person name="de Winde J.H."/>
            <person name="Archer D.B."/>
            <person name="Dyer P.S."/>
            <person name="Hofmann G."/>
            <person name="Schaap P.J."/>
            <person name="Turner G."/>
            <person name="de Vries R.P."/>
            <person name="Albang R."/>
            <person name="Albermann K."/>
            <person name="Andersen M.R."/>
            <person name="Bendtsen J.D."/>
            <person name="Benen J.A.E."/>
            <person name="van den Berg M."/>
            <person name="Breestraat S."/>
            <person name="Caddick M.X."/>
            <person name="Contreras R."/>
            <person name="Cornell M."/>
            <person name="Coutinho P.M."/>
            <person name="Danchin E.G.J."/>
            <person name="Debets A.J.M."/>
            <person name="Dekker P."/>
            <person name="van Dijck P.W.M."/>
            <person name="van Dijk A."/>
            <person name="Dijkhuizen L."/>
            <person name="Driessen A.J.M."/>
            <person name="d'Enfert C."/>
            <person name="Geysens S."/>
            <person name="Goosen C."/>
            <person name="Groot G.S.P."/>
            <person name="de Groot P.W.J."/>
            <person name="Guillemette T."/>
            <person name="Henrissat B."/>
            <person name="Herweijer M."/>
            <person name="van den Hombergh J.P.T.W."/>
            <person name="van den Hondel C.A.M.J.J."/>
            <person name="van der Heijden R.T.J.M."/>
            <person name="van der Kaaij R.M."/>
            <person name="Klis F.M."/>
            <person name="Kools H.J."/>
            <person name="Kubicek C.P."/>
            <person name="van Kuyk P.A."/>
            <person name="Lauber J."/>
            <person name="Lu X."/>
            <person name="van der Maarel M.J.E.C."/>
            <person name="Meulenberg R."/>
            <person name="Menke H."/>
            <person name="Mortimer M.A."/>
            <person name="Nielsen J."/>
            <person name="Oliver S.G."/>
            <person name="Olsthoorn M."/>
            <person name="Pal K."/>
            <person name="van Peij N.N.M.E."/>
            <person name="Ram A.F.J."/>
            <person name="Rinas U."/>
            <person name="Roubos J.A."/>
            <person name="Sagt C.M.J."/>
            <person name="Schmoll M."/>
            <person name="Sun J."/>
            <person name="Ussery D."/>
            <person name="Varga J."/>
            <person name="Vervecken W."/>
            <person name="van de Vondervoort P.J.J."/>
            <person name="Wedler H."/>
            <person name="Woesten H.A.B."/>
            <person name="Zeng A.-P."/>
            <person name="van Ooyen A.J.J."/>
            <person name="Visser J."/>
            <person name="Stam H."/>
        </authorList>
    </citation>
    <scope>NUCLEOTIDE SEQUENCE [LARGE SCALE GENOMIC DNA]</scope>
    <source>
        <strain>ATCC MYA-4892 / CBS 513.88 / FGSC A1513</strain>
    </source>
</reference>
<comment type="function">
    <text evidence="1">Transcriptional activator of the xylanolytic system. Involved in the regulation of extracellular cellulolytic and xylanolytic genes and in the regulation of the intracellular activities of D-xylose catabolic genes in the pentose catabolic pathway (PCP) in response to the presence of D-xylose. Binds to the DNA sequence 5'-GGCTAAA-3' (By similarity).</text>
</comment>
<comment type="subcellular location">
    <subcellularLocation>
        <location evidence="2">Nucleus</location>
    </subcellularLocation>
</comment>
<comment type="similarity">
    <text evidence="4">Belongs to the xlnR/xlr1 family.</text>
</comment>
<comment type="sequence caution" evidence="4">
    <conflict type="erroneous gene model prediction">
        <sequence resource="EMBL-CDS" id="CAK42534"/>
    </conflict>
</comment>
<sequence length="945" mass="102090">MSTPSIPQFTSPFSPFSSGSHSTGMAPSQTVGLDTLAEGSQYVLEQLQLSRDAAGSGAGDGAPSTSLRNSMSHTKDQPPFDNEKNQSTGSGFRDALQRDPLVEARSAIRKTSSSAPVRRRISRACDQCNQLRTKCDGQHPCAHCIEFGLTCEYARERKKRGKASKKDLAAAAAAATQGSNGHSGQANASLMGERTSEDSRPGQDVNGTYDSAFESHHLSSQPSHMQHASTAGISGLHESQTAPSHSQPSLGTTIDAMHLNHFNTMNDSGRPAMSISDLRSLPPSVLPPQGLSSGYNASAFALVNPQEPGSPANQFRLGSSAENPTAPFLGLSPPGQSPGWLPLPSPSPANFPSFSLHPFSSTLRYPVLQPVLPHIASIIPQSLACDLLDVYFTSSSSSHLSPLSPYVVGYIFRKQSFLHPTKPRICSPGLLASMLWVAAQTSEAAFLTSPPSARGRVCQKLLELTIGLLRPLVHGPATGEASPNYAANMVINGVALGGFGVSMDQLGAQSSATGAVDDVATYVHLATVVSASEYKAASMRWWTAAWSLARELKLGRELPPNVSHARQDGERDGDGEADKRHPPTLITSLGHGSGSSGINVTEEEREERRRLWWLLYATDRHLALCYNRPLTLLDKECGGLLQPMNDDLWQVGDFAAAAYRQVGPPVECTGHSMYGYFLPLMTILGGIVDLHHAENHPRFGLAFRNSPEWERQVLDVTRQLDTYGRSLKEFEARYTSNLTLGATDNEPVVEGAHLDHTSPSGRSSSTVGSRVSESIVHTRMVVAYGTHIMHVLHILLAGKWDPVNLLEDHDLWISSESFVSAMSHAVGAAEAAAEILEYDPDLSFMPFFFGIYLLQGSFLLLLAADKLQGDASPSVVRACETIVRAHEACVVTLNTEYQRTFRKVMRSALAQVRGRIPEDFGEQQQRRREVLALYRWSGDGSGLAL</sequence>
<dbReference type="EMBL" id="AM270347">
    <property type="protein sequence ID" value="CAK42534.1"/>
    <property type="status" value="ALT_SEQ"/>
    <property type="molecule type" value="Genomic_DNA"/>
</dbReference>
<dbReference type="RefSeq" id="XP_001397110.2">
    <property type="nucleotide sequence ID" value="XM_001397073.2"/>
</dbReference>
<dbReference type="EnsemblFungi" id="CAK42534">
    <property type="protein sequence ID" value="CAK42534"/>
    <property type="gene ID" value="An15g05810"/>
</dbReference>
<dbReference type="GeneID" id="4988182"/>
<dbReference type="KEGG" id="ang:An15g05810"/>
<dbReference type="Proteomes" id="UP000006706">
    <property type="component" value="Chromosome 3R"/>
</dbReference>
<dbReference type="GO" id="GO:0005634">
    <property type="term" value="C:nucleus"/>
    <property type="evidence" value="ECO:0007669"/>
    <property type="project" value="UniProtKB-SubCell"/>
</dbReference>
<dbReference type="GO" id="GO:0003677">
    <property type="term" value="F:DNA binding"/>
    <property type="evidence" value="ECO:0007669"/>
    <property type="project" value="UniProtKB-KW"/>
</dbReference>
<dbReference type="GO" id="GO:0000981">
    <property type="term" value="F:DNA-binding transcription factor activity, RNA polymerase II-specific"/>
    <property type="evidence" value="ECO:0007669"/>
    <property type="project" value="InterPro"/>
</dbReference>
<dbReference type="GO" id="GO:0008270">
    <property type="term" value="F:zinc ion binding"/>
    <property type="evidence" value="ECO:0007669"/>
    <property type="project" value="InterPro"/>
</dbReference>
<dbReference type="GO" id="GO:0006351">
    <property type="term" value="P:DNA-templated transcription"/>
    <property type="evidence" value="ECO:0007669"/>
    <property type="project" value="InterPro"/>
</dbReference>
<dbReference type="GO" id="GO:0045893">
    <property type="term" value="P:positive regulation of DNA-templated transcription"/>
    <property type="evidence" value="ECO:0000250"/>
    <property type="project" value="UniProtKB"/>
</dbReference>
<dbReference type="GO" id="GO:0045493">
    <property type="term" value="P:xylan catabolic process"/>
    <property type="evidence" value="ECO:0000250"/>
    <property type="project" value="UniProtKB"/>
</dbReference>
<dbReference type="CDD" id="cd12148">
    <property type="entry name" value="fungal_TF_MHR"/>
    <property type="match status" value="1"/>
</dbReference>
<dbReference type="CDD" id="cd00067">
    <property type="entry name" value="GAL4"/>
    <property type="match status" value="1"/>
</dbReference>
<dbReference type="FunFam" id="4.10.240.10:FF:000004">
    <property type="entry name" value="Xylanolytic transcriptional activator XlnR"/>
    <property type="match status" value="1"/>
</dbReference>
<dbReference type="Gene3D" id="4.10.240.10">
    <property type="entry name" value="Zn(2)-C6 fungal-type DNA-binding domain"/>
    <property type="match status" value="1"/>
</dbReference>
<dbReference type="InterPro" id="IPR007219">
    <property type="entry name" value="Transcription_factor_dom_fun"/>
</dbReference>
<dbReference type="InterPro" id="IPR051439">
    <property type="entry name" value="XlnR/Xlr1"/>
</dbReference>
<dbReference type="InterPro" id="IPR036864">
    <property type="entry name" value="Zn2-C6_fun-type_DNA-bd_sf"/>
</dbReference>
<dbReference type="InterPro" id="IPR001138">
    <property type="entry name" value="Zn2Cys6_DnaBD"/>
</dbReference>
<dbReference type="PANTHER" id="PTHR47663">
    <property type="entry name" value="XYLANOLYTIC TRANSCRIPTIONAL ACTIVATOR XLNR-RELATED"/>
    <property type="match status" value="1"/>
</dbReference>
<dbReference type="PANTHER" id="PTHR47663:SF1">
    <property type="entry name" value="XYLANOLYTIC TRANSCRIPTIONAL ACTIVATOR XLNR-RELATED"/>
    <property type="match status" value="1"/>
</dbReference>
<dbReference type="Pfam" id="PF04082">
    <property type="entry name" value="Fungal_trans"/>
    <property type="match status" value="1"/>
</dbReference>
<dbReference type="Pfam" id="PF00172">
    <property type="entry name" value="Zn_clus"/>
    <property type="match status" value="1"/>
</dbReference>
<dbReference type="SMART" id="SM00906">
    <property type="entry name" value="Fungal_trans"/>
    <property type="match status" value="1"/>
</dbReference>
<dbReference type="SMART" id="SM00066">
    <property type="entry name" value="GAL4"/>
    <property type="match status" value="1"/>
</dbReference>
<dbReference type="SUPFAM" id="SSF57701">
    <property type="entry name" value="Zn2/Cys6 DNA-binding domain"/>
    <property type="match status" value="1"/>
</dbReference>
<dbReference type="PROSITE" id="PS50048">
    <property type="entry name" value="ZN2_CY6_FUNGAL_2"/>
    <property type="match status" value="1"/>
</dbReference>
<accession>A2R5W7</accession>
<proteinExistence type="inferred from homology"/>
<keyword id="KW-0010">Activator</keyword>
<keyword id="KW-0238">DNA-binding</keyword>
<keyword id="KW-0479">Metal-binding</keyword>
<keyword id="KW-0539">Nucleus</keyword>
<keyword id="KW-1185">Reference proteome</keyword>
<keyword id="KW-0804">Transcription</keyword>
<keyword id="KW-0805">Transcription regulation</keyword>
<keyword id="KW-0862">Zinc</keyword>
<gene>
    <name type="primary">xlnR</name>
    <name type="ORF">An15g05810</name>
</gene>
<evidence type="ECO:0000250" key="1"/>
<evidence type="ECO:0000255" key="2">
    <source>
        <dbReference type="PROSITE-ProRule" id="PRU00227"/>
    </source>
</evidence>
<evidence type="ECO:0000256" key="3">
    <source>
        <dbReference type="SAM" id="MobiDB-lite"/>
    </source>
</evidence>
<evidence type="ECO:0000305" key="4"/>